<accession>Q2LUP6</accession>
<sequence>MPEGVPCGRRGAMLNVGLTGSISCGKSTVARMLEGKGAFIIDFDRLAHDVEEPDKPAWRGIVDTFGPDVLREDRTIDRARLGTLVFADRRKLEKLNEIVHPAVFEAWRRSVEEIRGVRPDAIVVSDFPLLIELGKQNDYDVILLVYIPPQEQIRRLILRNGYSPEEAIQRVNSQMSIEDKIDFADIIVNNAGPREQTQAQIDKIWTQLLKKERLQRKSAASSFQTGTIHKEREVG</sequence>
<proteinExistence type="inferred from homology"/>
<reference key="1">
    <citation type="journal article" date="2007" name="Proc. Natl. Acad. Sci. U.S.A.">
        <title>The genome of Syntrophus aciditrophicus: life at the thermodynamic limit of microbial growth.</title>
        <authorList>
            <person name="McInerney M.J."/>
            <person name="Rohlin L."/>
            <person name="Mouttaki H."/>
            <person name="Kim U."/>
            <person name="Krupp R.S."/>
            <person name="Rios-Hernandez L."/>
            <person name="Sieber J."/>
            <person name="Struchtemeyer C.G."/>
            <person name="Bhattacharyya A."/>
            <person name="Campbell J.W."/>
            <person name="Gunsalus R.P."/>
        </authorList>
    </citation>
    <scope>NUCLEOTIDE SEQUENCE [LARGE SCALE GENOMIC DNA]</scope>
    <source>
        <strain>SB</strain>
    </source>
</reference>
<dbReference type="EC" id="2.7.1.24" evidence="1"/>
<dbReference type="EMBL" id="CP000252">
    <property type="protein sequence ID" value="ABC77810.1"/>
    <property type="molecule type" value="Genomic_DNA"/>
</dbReference>
<dbReference type="SMR" id="Q2LUP6"/>
<dbReference type="FunCoup" id="Q2LUP6">
    <property type="interactions" value="361"/>
</dbReference>
<dbReference type="STRING" id="56780.SYN_02876"/>
<dbReference type="KEGG" id="sat:SYN_02876"/>
<dbReference type="eggNOG" id="COG0237">
    <property type="taxonomic scope" value="Bacteria"/>
</dbReference>
<dbReference type="HOGENOM" id="CLU_057180_0_0_7"/>
<dbReference type="InParanoid" id="Q2LUP6"/>
<dbReference type="UniPathway" id="UPA00241">
    <property type="reaction ID" value="UER00356"/>
</dbReference>
<dbReference type="Proteomes" id="UP000001933">
    <property type="component" value="Chromosome"/>
</dbReference>
<dbReference type="GO" id="GO:0005737">
    <property type="term" value="C:cytoplasm"/>
    <property type="evidence" value="ECO:0007669"/>
    <property type="project" value="UniProtKB-SubCell"/>
</dbReference>
<dbReference type="GO" id="GO:0005524">
    <property type="term" value="F:ATP binding"/>
    <property type="evidence" value="ECO:0007669"/>
    <property type="project" value="UniProtKB-UniRule"/>
</dbReference>
<dbReference type="GO" id="GO:0004140">
    <property type="term" value="F:dephospho-CoA kinase activity"/>
    <property type="evidence" value="ECO:0007669"/>
    <property type="project" value="UniProtKB-UniRule"/>
</dbReference>
<dbReference type="GO" id="GO:0015937">
    <property type="term" value="P:coenzyme A biosynthetic process"/>
    <property type="evidence" value="ECO:0007669"/>
    <property type="project" value="UniProtKB-UniRule"/>
</dbReference>
<dbReference type="CDD" id="cd02022">
    <property type="entry name" value="DPCK"/>
    <property type="match status" value="1"/>
</dbReference>
<dbReference type="Gene3D" id="3.40.50.300">
    <property type="entry name" value="P-loop containing nucleotide triphosphate hydrolases"/>
    <property type="match status" value="1"/>
</dbReference>
<dbReference type="HAMAP" id="MF_00376">
    <property type="entry name" value="Dephospho_CoA_kinase"/>
    <property type="match status" value="1"/>
</dbReference>
<dbReference type="InterPro" id="IPR001977">
    <property type="entry name" value="Depp_CoAkinase"/>
</dbReference>
<dbReference type="InterPro" id="IPR027417">
    <property type="entry name" value="P-loop_NTPase"/>
</dbReference>
<dbReference type="NCBIfam" id="TIGR00152">
    <property type="entry name" value="dephospho-CoA kinase"/>
    <property type="match status" value="1"/>
</dbReference>
<dbReference type="PANTHER" id="PTHR10695:SF46">
    <property type="entry name" value="BIFUNCTIONAL COENZYME A SYNTHASE-RELATED"/>
    <property type="match status" value="1"/>
</dbReference>
<dbReference type="PANTHER" id="PTHR10695">
    <property type="entry name" value="DEPHOSPHO-COA KINASE-RELATED"/>
    <property type="match status" value="1"/>
</dbReference>
<dbReference type="Pfam" id="PF01121">
    <property type="entry name" value="CoaE"/>
    <property type="match status" value="1"/>
</dbReference>
<dbReference type="SUPFAM" id="SSF52540">
    <property type="entry name" value="P-loop containing nucleoside triphosphate hydrolases"/>
    <property type="match status" value="1"/>
</dbReference>
<dbReference type="PROSITE" id="PS51219">
    <property type="entry name" value="DPCK"/>
    <property type="match status" value="1"/>
</dbReference>
<protein>
    <recommendedName>
        <fullName evidence="1">Dephospho-CoA kinase</fullName>
        <ecNumber evidence="1">2.7.1.24</ecNumber>
    </recommendedName>
    <alternativeName>
        <fullName evidence="1">Dephosphocoenzyme A kinase</fullName>
    </alternativeName>
</protein>
<organism>
    <name type="scientific">Syntrophus aciditrophicus (strain SB)</name>
    <dbReference type="NCBI Taxonomy" id="56780"/>
    <lineage>
        <taxon>Bacteria</taxon>
        <taxon>Pseudomonadati</taxon>
        <taxon>Thermodesulfobacteriota</taxon>
        <taxon>Syntrophia</taxon>
        <taxon>Syntrophales</taxon>
        <taxon>Syntrophaceae</taxon>
        <taxon>Syntrophus</taxon>
    </lineage>
</organism>
<gene>
    <name evidence="1" type="primary">coaE</name>
    <name type="ordered locus">SYNAS_19310</name>
    <name type="ORF">SYN_02876</name>
</gene>
<keyword id="KW-0067">ATP-binding</keyword>
<keyword id="KW-0173">Coenzyme A biosynthesis</keyword>
<keyword id="KW-0963">Cytoplasm</keyword>
<keyword id="KW-0418">Kinase</keyword>
<keyword id="KW-0547">Nucleotide-binding</keyword>
<keyword id="KW-1185">Reference proteome</keyword>
<keyword id="KW-0808">Transferase</keyword>
<evidence type="ECO:0000255" key="1">
    <source>
        <dbReference type="HAMAP-Rule" id="MF_00376"/>
    </source>
</evidence>
<feature type="chain" id="PRO_0000243357" description="Dephospho-CoA kinase">
    <location>
        <begin position="1"/>
        <end position="235"/>
    </location>
</feature>
<feature type="domain" description="DPCK" evidence="1">
    <location>
        <begin position="15"/>
        <end position="219"/>
    </location>
</feature>
<feature type="binding site" evidence="1">
    <location>
        <begin position="23"/>
        <end position="28"/>
    </location>
    <ligand>
        <name>ATP</name>
        <dbReference type="ChEBI" id="CHEBI:30616"/>
    </ligand>
</feature>
<comment type="function">
    <text evidence="1">Catalyzes the phosphorylation of the 3'-hydroxyl group of dephosphocoenzyme A to form coenzyme A.</text>
</comment>
<comment type="catalytic activity">
    <reaction evidence="1">
        <text>3'-dephospho-CoA + ATP = ADP + CoA + H(+)</text>
        <dbReference type="Rhea" id="RHEA:18245"/>
        <dbReference type="ChEBI" id="CHEBI:15378"/>
        <dbReference type="ChEBI" id="CHEBI:30616"/>
        <dbReference type="ChEBI" id="CHEBI:57287"/>
        <dbReference type="ChEBI" id="CHEBI:57328"/>
        <dbReference type="ChEBI" id="CHEBI:456216"/>
        <dbReference type="EC" id="2.7.1.24"/>
    </reaction>
</comment>
<comment type="pathway">
    <text evidence="1">Cofactor biosynthesis; coenzyme A biosynthesis; CoA from (R)-pantothenate: step 5/5.</text>
</comment>
<comment type="subcellular location">
    <subcellularLocation>
        <location evidence="1">Cytoplasm</location>
    </subcellularLocation>
</comment>
<comment type="similarity">
    <text evidence="1">Belongs to the CoaE family.</text>
</comment>
<name>COAE_SYNAS</name>